<evidence type="ECO:0000255" key="1"/>
<evidence type="ECO:0000305" key="2"/>
<comment type="subcellular location">
    <subcellularLocation>
        <location evidence="2">Cell membrane</location>
        <topology evidence="2">Multi-pass membrane protein</topology>
    </subcellularLocation>
</comment>
<comment type="similarity">
    <text evidence="2">Belongs to the UPF0056 (MarC) family.</text>
</comment>
<proteinExistence type="inferred from homology"/>
<keyword id="KW-1003">Cell membrane</keyword>
<keyword id="KW-0472">Membrane</keyword>
<keyword id="KW-0812">Transmembrane</keyword>
<keyword id="KW-1133">Transmembrane helix</keyword>
<gene>
    <name type="ordered locus">PH0760</name>
    <name type="ORF">PHCI026</name>
</gene>
<organism>
    <name type="scientific">Pyrococcus horikoshii (strain ATCC 700860 / DSM 12428 / JCM 9974 / NBRC 100139 / OT-3)</name>
    <dbReference type="NCBI Taxonomy" id="70601"/>
    <lineage>
        <taxon>Archaea</taxon>
        <taxon>Methanobacteriati</taxon>
        <taxon>Methanobacteriota</taxon>
        <taxon>Thermococci</taxon>
        <taxon>Thermococcales</taxon>
        <taxon>Thermococcaceae</taxon>
        <taxon>Pyrococcus</taxon>
    </lineage>
</organism>
<name>Y760_PYRHO</name>
<protein>
    <recommendedName>
        <fullName>UPF0056 membrane protein PH0760</fullName>
    </recommendedName>
</protein>
<feature type="chain" id="PRO_0000156922" description="UPF0056 membrane protein PH0760">
    <location>
        <begin position="1"/>
        <end position="201"/>
    </location>
</feature>
<feature type="transmembrane region" description="Helical" evidence="1">
    <location>
        <begin position="8"/>
        <end position="28"/>
    </location>
</feature>
<feature type="transmembrane region" description="Helical" evidence="1">
    <location>
        <begin position="49"/>
        <end position="69"/>
    </location>
</feature>
<feature type="transmembrane region" description="Helical" evidence="1">
    <location>
        <begin position="73"/>
        <end position="93"/>
    </location>
</feature>
<feature type="transmembrane region" description="Helical" evidence="1">
    <location>
        <begin position="111"/>
        <end position="131"/>
    </location>
</feature>
<feature type="transmembrane region" description="Helical" evidence="1">
    <location>
        <begin position="140"/>
        <end position="160"/>
    </location>
</feature>
<feature type="transmembrane region" description="Helical" evidence="1">
    <location>
        <begin position="181"/>
        <end position="201"/>
    </location>
</feature>
<dbReference type="EMBL" id="BA000001">
    <property type="protein sequence ID" value="BAA29851.1"/>
    <property type="molecule type" value="Genomic_DNA"/>
</dbReference>
<dbReference type="PIR" id="A71124">
    <property type="entry name" value="A71124"/>
</dbReference>
<dbReference type="RefSeq" id="WP_010884852.1">
    <property type="nucleotide sequence ID" value="NC_000961.1"/>
</dbReference>
<dbReference type="SMR" id="O58499"/>
<dbReference type="EnsemblBacteria" id="BAA29851">
    <property type="protein sequence ID" value="BAA29851"/>
    <property type="gene ID" value="BAA29851"/>
</dbReference>
<dbReference type="GeneID" id="1443087"/>
<dbReference type="KEGG" id="pho:PH0760"/>
<dbReference type="eggNOG" id="arCOG01997">
    <property type="taxonomic scope" value="Archaea"/>
</dbReference>
<dbReference type="OrthoDB" id="10856at2157"/>
<dbReference type="Proteomes" id="UP000000752">
    <property type="component" value="Chromosome"/>
</dbReference>
<dbReference type="GO" id="GO:0005886">
    <property type="term" value="C:plasma membrane"/>
    <property type="evidence" value="ECO:0007669"/>
    <property type="project" value="UniProtKB-SubCell"/>
</dbReference>
<dbReference type="InterPro" id="IPR002771">
    <property type="entry name" value="Multi_antbiot-R_MarC"/>
</dbReference>
<dbReference type="NCBIfam" id="TIGR00427">
    <property type="entry name" value="NAAT family transporter"/>
    <property type="match status" value="1"/>
</dbReference>
<dbReference type="PANTHER" id="PTHR33508">
    <property type="entry name" value="UPF0056 MEMBRANE PROTEIN YHCE"/>
    <property type="match status" value="1"/>
</dbReference>
<dbReference type="PANTHER" id="PTHR33508:SF1">
    <property type="entry name" value="UPF0056 MEMBRANE PROTEIN YHCE"/>
    <property type="match status" value="1"/>
</dbReference>
<dbReference type="Pfam" id="PF01914">
    <property type="entry name" value="MarC"/>
    <property type="match status" value="1"/>
</dbReference>
<sequence length="201" mass="21592">MLEAIKTFMILYTGMFAITNPIGAVPVFMSVVGHLPAEIKHEVAKKVSITVFITLTVFALVGQWIFKFFGSSIDAFAIAGGILLFRMGMEMLSGKLSSVKIDEEDVTLEEVAVIPLAIPLISGPGAITTVMLYMTKESPGIVILTIIAIGLTTYGILYSGNKIIERLGRVGVKVTTRMMGLILTSMAMQMIINGIKGAFGI</sequence>
<reference key="1">
    <citation type="journal article" date="1998" name="DNA Res.">
        <title>Complete sequence and gene organization of the genome of a hyper-thermophilic archaebacterium, Pyrococcus horikoshii OT3.</title>
        <authorList>
            <person name="Kawarabayasi Y."/>
            <person name="Sawada M."/>
            <person name="Horikawa H."/>
            <person name="Haikawa Y."/>
            <person name="Hino Y."/>
            <person name="Yamamoto S."/>
            <person name="Sekine M."/>
            <person name="Baba S."/>
            <person name="Kosugi H."/>
            <person name="Hosoyama A."/>
            <person name="Nagai Y."/>
            <person name="Sakai M."/>
            <person name="Ogura K."/>
            <person name="Otsuka R."/>
            <person name="Nakazawa H."/>
            <person name="Takamiya M."/>
            <person name="Ohfuku Y."/>
            <person name="Funahashi T."/>
            <person name="Tanaka T."/>
            <person name="Kudoh Y."/>
            <person name="Yamazaki J."/>
            <person name="Kushida N."/>
            <person name="Oguchi A."/>
            <person name="Aoki K."/>
            <person name="Yoshizawa T."/>
            <person name="Nakamura Y."/>
            <person name="Robb F.T."/>
            <person name="Horikoshi K."/>
            <person name="Masuchi Y."/>
            <person name="Shizuya H."/>
            <person name="Kikuchi H."/>
        </authorList>
    </citation>
    <scope>NUCLEOTIDE SEQUENCE [LARGE SCALE GENOMIC DNA]</scope>
    <source>
        <strain>ATCC 700860 / DSM 12428 / JCM 9974 / NBRC 100139 / OT-3</strain>
    </source>
</reference>
<accession>O58499</accession>